<proteinExistence type="evidence at transcript level"/>
<gene>
    <name type="primary">STC</name>
</gene>
<comment type="subcellular location">
    <subcellularLocation>
        <location evidence="2">Membrane</location>
        <topology evidence="2">Multi-pass membrane protein</topology>
    </subcellularLocation>
</comment>
<comment type="similarity">
    <text evidence="2">Belongs to the major facilitator superfamily. Sugar transporter (TC 2.A.1.1) family.</text>
</comment>
<evidence type="ECO:0000255" key="1"/>
<evidence type="ECO:0000305" key="2"/>
<accession>Q41144</accession>
<accession>Q41147</accession>
<name>STC_RICCO</name>
<keyword id="KW-0472">Membrane</keyword>
<keyword id="KW-0762">Sugar transport</keyword>
<keyword id="KW-0769">Symport</keyword>
<keyword id="KW-0812">Transmembrane</keyword>
<keyword id="KW-1133">Transmembrane helix</keyword>
<keyword id="KW-0813">Transport</keyword>
<reference key="1">
    <citation type="journal article" date="1994" name="J. Plant Physiol.">
        <title>Isolation of a family of cDNA-clones from Ricinus communis L. with close homology to the hexose carriers.</title>
        <authorList>
            <person name="Weig A."/>
            <person name="Franz J."/>
            <person name="Sauer N."/>
            <person name="Komor E."/>
        </authorList>
    </citation>
    <scope>NUCLEOTIDE SEQUENCE [MRNA]</scope>
    <source>
        <strain>cv. Carmencita</strain>
        <tissue>Cotyledon</tissue>
    </source>
</reference>
<dbReference type="EMBL" id="L08196">
    <property type="protein sequence ID" value="AAA79761.1"/>
    <property type="molecule type" value="mRNA"/>
</dbReference>
<dbReference type="EMBL" id="L08191">
    <property type="protein sequence ID" value="AAA79764.1"/>
    <property type="molecule type" value="mRNA"/>
</dbReference>
<dbReference type="PIR" id="T10122">
    <property type="entry name" value="T10122"/>
</dbReference>
<dbReference type="RefSeq" id="NP_001310672.1">
    <property type="nucleotide sequence ID" value="NM_001323743.1"/>
</dbReference>
<dbReference type="SMR" id="Q41144"/>
<dbReference type="GeneID" id="8275367"/>
<dbReference type="KEGG" id="rcu:8275367"/>
<dbReference type="eggNOG" id="KOG0254">
    <property type="taxonomic scope" value="Eukaryota"/>
</dbReference>
<dbReference type="OMA" id="IYYFGTL"/>
<dbReference type="OrthoDB" id="5296287at2759"/>
<dbReference type="GO" id="GO:0016020">
    <property type="term" value="C:membrane"/>
    <property type="evidence" value="ECO:0007669"/>
    <property type="project" value="UniProtKB-SubCell"/>
</dbReference>
<dbReference type="GO" id="GO:0015145">
    <property type="term" value="F:monosaccharide transmembrane transporter activity"/>
    <property type="evidence" value="ECO:0007669"/>
    <property type="project" value="InterPro"/>
</dbReference>
<dbReference type="GO" id="GO:0015293">
    <property type="term" value="F:symporter activity"/>
    <property type="evidence" value="ECO:0007669"/>
    <property type="project" value="UniProtKB-KW"/>
</dbReference>
<dbReference type="CDD" id="cd17361">
    <property type="entry name" value="MFS_STP"/>
    <property type="match status" value="1"/>
</dbReference>
<dbReference type="FunFam" id="1.20.1250.20:FF:000002">
    <property type="entry name" value="Sugar transport protein 13"/>
    <property type="match status" value="1"/>
</dbReference>
<dbReference type="Gene3D" id="1.20.1250.20">
    <property type="entry name" value="MFS general substrate transporter like domains"/>
    <property type="match status" value="1"/>
</dbReference>
<dbReference type="InterPro" id="IPR020846">
    <property type="entry name" value="MFS_dom"/>
</dbReference>
<dbReference type="InterPro" id="IPR044778">
    <property type="entry name" value="MFS_STP/MST-like_plant"/>
</dbReference>
<dbReference type="InterPro" id="IPR005828">
    <property type="entry name" value="MFS_sugar_transport-like"/>
</dbReference>
<dbReference type="InterPro" id="IPR036259">
    <property type="entry name" value="MFS_trans_sf"/>
</dbReference>
<dbReference type="InterPro" id="IPR045262">
    <property type="entry name" value="STP/PLT_plant"/>
</dbReference>
<dbReference type="InterPro" id="IPR003663">
    <property type="entry name" value="Sugar/inositol_transpt"/>
</dbReference>
<dbReference type="InterPro" id="IPR005829">
    <property type="entry name" value="Sugar_transporter_CS"/>
</dbReference>
<dbReference type="NCBIfam" id="TIGR00879">
    <property type="entry name" value="SP"/>
    <property type="match status" value="1"/>
</dbReference>
<dbReference type="PANTHER" id="PTHR23500">
    <property type="entry name" value="SOLUTE CARRIER FAMILY 2, FACILITATED GLUCOSE TRANSPORTER"/>
    <property type="match status" value="1"/>
</dbReference>
<dbReference type="PANTHER" id="PTHR23500:SF574">
    <property type="entry name" value="SUGAR TRANSPORT PROTEIN 1"/>
    <property type="match status" value="1"/>
</dbReference>
<dbReference type="Pfam" id="PF00083">
    <property type="entry name" value="Sugar_tr"/>
    <property type="match status" value="1"/>
</dbReference>
<dbReference type="PRINTS" id="PR00171">
    <property type="entry name" value="SUGRTRNSPORT"/>
</dbReference>
<dbReference type="SUPFAM" id="SSF103473">
    <property type="entry name" value="MFS general substrate transporter"/>
    <property type="match status" value="1"/>
</dbReference>
<dbReference type="PROSITE" id="PS50850">
    <property type="entry name" value="MFS"/>
    <property type="match status" value="1"/>
</dbReference>
<dbReference type="PROSITE" id="PS00216">
    <property type="entry name" value="SUGAR_TRANSPORT_1"/>
    <property type="match status" value="1"/>
</dbReference>
<dbReference type="PROSITE" id="PS00217">
    <property type="entry name" value="SUGAR_TRANSPORT_2"/>
    <property type="match status" value="1"/>
</dbReference>
<feature type="chain" id="PRO_0000050447" description="Sugar carrier protein C">
    <location>
        <begin position="1"/>
        <end position="523"/>
    </location>
</feature>
<feature type="topological domain" description="Cytoplasmic" evidence="1">
    <location>
        <begin position="1"/>
        <end position="25"/>
    </location>
</feature>
<feature type="transmembrane region" description="Helical; Name=1" evidence="1">
    <location>
        <begin position="26"/>
        <end position="46"/>
    </location>
</feature>
<feature type="transmembrane region" description="Helical; Name=2" evidence="1">
    <location>
        <begin position="86"/>
        <end position="106"/>
    </location>
</feature>
<feature type="transmembrane region" description="Helical; Name=3" evidence="1">
    <location>
        <begin position="120"/>
        <end position="140"/>
    </location>
</feature>
<feature type="transmembrane region" description="Helical; Name=4" evidence="1">
    <location>
        <begin position="143"/>
        <end position="163"/>
    </location>
</feature>
<feature type="transmembrane region" description="Helical; Name=5" evidence="1">
    <location>
        <begin position="172"/>
        <end position="192"/>
    </location>
</feature>
<feature type="transmembrane region" description="Helical; Name=6" evidence="1">
    <location>
        <begin position="205"/>
        <end position="225"/>
    </location>
</feature>
<feature type="transmembrane region" description="Helical; Name=7" evidence="1">
    <location>
        <begin position="298"/>
        <end position="320"/>
    </location>
</feature>
<feature type="transmembrane region" description="Helical; Name=8" evidence="1">
    <location>
        <begin position="327"/>
        <end position="347"/>
    </location>
</feature>
<feature type="transmembrane region" description="Helical; Name=9" evidence="1">
    <location>
        <begin position="351"/>
        <end position="371"/>
    </location>
</feature>
<feature type="transmembrane region" description="Helical; Name=10" evidence="1">
    <location>
        <begin position="387"/>
        <end position="407"/>
    </location>
</feature>
<feature type="transmembrane region" description="Helical; Name=11" evidence="1">
    <location>
        <begin position="433"/>
        <end position="453"/>
    </location>
</feature>
<feature type="transmembrane region" description="Helical; Name=12" evidence="1">
    <location>
        <begin position="456"/>
        <end position="476"/>
    </location>
</feature>
<feature type="topological domain" description="Cytoplasmic" evidence="1">
    <location>
        <begin position="477"/>
        <end position="523"/>
    </location>
</feature>
<organism>
    <name type="scientific">Ricinus communis</name>
    <name type="common">Castor bean</name>
    <dbReference type="NCBI Taxonomy" id="3988"/>
    <lineage>
        <taxon>Eukaryota</taxon>
        <taxon>Viridiplantae</taxon>
        <taxon>Streptophyta</taxon>
        <taxon>Embryophyta</taxon>
        <taxon>Tracheophyta</taxon>
        <taxon>Spermatophyta</taxon>
        <taxon>Magnoliopsida</taxon>
        <taxon>eudicotyledons</taxon>
        <taxon>Gunneridae</taxon>
        <taxon>Pentapetalae</taxon>
        <taxon>rosids</taxon>
        <taxon>fabids</taxon>
        <taxon>Malpighiales</taxon>
        <taxon>Euphorbiaceae</taxon>
        <taxon>Acalyphoideae</taxon>
        <taxon>Acalypheae</taxon>
        <taxon>Ricinus</taxon>
    </lineage>
</organism>
<sequence length="523" mass="57769">MPAVGGIPPSGGNRKVYPGNLTLYVTVTCVVAAMGGLIFGYDIGISGGVTSMDSFLKKFFPSVYRKKKADESSNQYCQYDSQTLTMFTSSLYLAALIASLVASTITRKFGRKLSMLFGGVLFCAGAIINGAAKAVWMLILGRILLGFGIGFANQSVPLYLSEMAPYKYRGALNIGFQLSITIGILVANVLNYFFAKIKGGWGWRLSLGGAMVPALIITVGSLVLPDTPNSMIERGQHEEARAHLKRVRGVEDVDEEFTDLVHASEDSKKVEHPWRNLLQRKYRPHLSMAIAIPFFQQLTGINVIMFYAPVLFDTIGFGSDAALMSAVITGLVNVFATMVSIYGVDKWGRRFLFLEGGVQMLICQAIVAACIGAKFGVDGAPGDLPQWYAVVVVLFICIYVSGFAWSWGPLGWLVPSEIFPLEIRSAAQSVNVSVNMFFTFVVAQVFLIMLCHLKFGLFIFFSFFVLIMSIFVYYFLPETKGIPIEEMGQVWKQHWYWSRYVVDEDYPNGGLEMGKEGRIPKNV</sequence>
<protein>
    <recommendedName>
        <fullName>Sugar carrier protein C</fullName>
    </recommendedName>
</protein>